<keyword id="KW-0217">Developmental protein</keyword>
<keyword id="KW-0221">Differentiation</keyword>
<keyword id="KW-0225">Disease variant</keyword>
<keyword id="KW-1015">Disulfide bond</keyword>
<keyword id="KW-0325">Glycoprotein</keyword>
<keyword id="KW-1016">Hypogonadotropic hypogonadism</keyword>
<keyword id="KW-0393">Immunoglobulin domain</keyword>
<keyword id="KW-0956">Kallmann syndrome</keyword>
<keyword id="KW-0524">Neurogenesis</keyword>
<keyword id="KW-1267">Proteomics identification</keyword>
<keyword id="KW-1185">Reference proteome</keyword>
<keyword id="KW-0964">Secreted</keyword>
<keyword id="KW-0732">Signal</keyword>
<evidence type="ECO:0000250" key="1"/>
<evidence type="ECO:0000255" key="2"/>
<evidence type="ECO:0000255" key="3">
    <source>
        <dbReference type="PROSITE-ProRule" id="PRU00352"/>
    </source>
</evidence>
<evidence type="ECO:0000256" key="4">
    <source>
        <dbReference type="SAM" id="MobiDB-lite"/>
    </source>
</evidence>
<evidence type="ECO:0000269" key="5">
    <source>
    </source>
</evidence>
<evidence type="ECO:0000269" key="6">
    <source>
    </source>
</evidence>
<evidence type="ECO:0000269" key="7">
    <source>
    </source>
</evidence>
<evidence type="ECO:0000269" key="8">
    <source>
    </source>
</evidence>
<evidence type="ECO:0000269" key="9">
    <source>
    </source>
</evidence>
<evidence type="ECO:0000269" key="10">
    <source>
    </source>
</evidence>
<evidence type="ECO:0000305" key="11"/>
<comment type="function">
    <text evidence="7">Involved in the development of the olfactory system and in neuronal control of puberty. Induces the collapse and paralysis of neuronal growth cones. Could serve as a ligand that guides specific growth cones by a motility-inhibiting mechanism. Binds to the complex neuropilin-1/plexin-1.</text>
</comment>
<comment type="subunit">
    <text evidence="1">Interacts with PLXND1.</text>
</comment>
<comment type="subcellular location">
    <subcellularLocation>
        <location evidence="1">Secreted</location>
    </subcellularLocation>
</comment>
<comment type="tissue specificity">
    <text evidence="10">Expressed in the dorsal root ganglia.</text>
</comment>
<comment type="domain">
    <text>Strong binding to neuropilin is mediated by the carboxy third of the protein.</text>
</comment>
<comment type="disease" evidence="7 8 9">
    <disease id="DI-03576">
        <name>Hypogonadotropic hypogonadism 16 with or without anosmia</name>
        <acronym>HH16</acronym>
        <description>A disorder characterized by absent or incomplete sexual maturation by the age of 18 years, in conjunction with low levels of circulating gonadotropins and testosterone and no other abnormalities of the hypothalamic-pituitary axis. In some cases, it is associated with non-reproductive phenotypes, such as anosmia, cleft palate, and sensorineural hearing loss. Anosmia or hyposmia is related to the absence or hypoplasia of the olfactory bulbs and tracts. Hypogonadism is due to deficiency in gonadotropin-releasing hormone and probably results from a failure of embryonic migration of gonadotropin-releasing hormone-synthesizing neurons. In the presence of anosmia, idiopathic hypogonadotropic hypogonadism is referred to as Kallmann syndrome, whereas in the presence of a normal sense of smell, it has been termed normosmic idiopathic hypogonadotropic hypogonadism (nIHH).</description>
        <dbReference type="MIM" id="614897"/>
    </disease>
    <text>The disease may be caused by variants affecting distinct genetic loci, including the gene represented in this entry.</text>
</comment>
<comment type="similarity">
    <text evidence="11">Belongs to the semaphorin family.</text>
</comment>
<dbReference type="EMBL" id="L26081">
    <property type="protein sequence ID" value="AAA65938.1"/>
    <property type="molecule type" value="mRNA"/>
</dbReference>
<dbReference type="EMBL" id="AC004451">
    <property type="protein sequence ID" value="AAS00353.1"/>
    <property type="molecule type" value="Genomic_DNA"/>
</dbReference>
<dbReference type="EMBL" id="AC004848">
    <property type="protein sequence ID" value="AAC78622.1"/>
    <property type="molecule type" value="Genomic_DNA"/>
</dbReference>
<dbReference type="CCDS" id="CCDS5599.1"/>
<dbReference type="PIR" id="D49423">
    <property type="entry name" value="D49423"/>
</dbReference>
<dbReference type="RefSeq" id="NP_006071.1">
    <property type="nucleotide sequence ID" value="NM_006080.3"/>
</dbReference>
<dbReference type="RefSeq" id="XP_005250167.1">
    <property type="nucleotide sequence ID" value="XM_005250110.4"/>
</dbReference>
<dbReference type="RefSeq" id="XP_005250168.1">
    <property type="nucleotide sequence ID" value="XM_005250111.4"/>
</dbReference>
<dbReference type="RefSeq" id="XP_006715902.1">
    <property type="nucleotide sequence ID" value="XM_006715839.3"/>
</dbReference>
<dbReference type="RefSeq" id="XP_011514036.1">
    <property type="nucleotide sequence ID" value="XM_011515734.2"/>
</dbReference>
<dbReference type="RefSeq" id="XP_016867162.1">
    <property type="nucleotide sequence ID" value="XM_017011673.1"/>
</dbReference>
<dbReference type="RefSeq" id="XP_047275707.1">
    <property type="nucleotide sequence ID" value="XM_047419751.1"/>
</dbReference>
<dbReference type="RefSeq" id="XP_054213019.1">
    <property type="nucleotide sequence ID" value="XM_054357044.1"/>
</dbReference>
<dbReference type="RefSeq" id="XP_054213020.1">
    <property type="nucleotide sequence ID" value="XM_054357045.1"/>
</dbReference>
<dbReference type="RefSeq" id="XP_054213021.1">
    <property type="nucleotide sequence ID" value="XM_054357046.1"/>
</dbReference>
<dbReference type="RefSeq" id="XP_054213022.1">
    <property type="nucleotide sequence ID" value="XM_054357047.1"/>
</dbReference>
<dbReference type="RefSeq" id="XP_054213023.1">
    <property type="nucleotide sequence ID" value="XM_054357048.1"/>
</dbReference>
<dbReference type="RefSeq" id="XP_054213024.1">
    <property type="nucleotide sequence ID" value="XM_054357049.1"/>
</dbReference>
<dbReference type="RefSeq" id="XP_054213025.1">
    <property type="nucleotide sequence ID" value="XM_054357050.1"/>
</dbReference>
<dbReference type="RefSeq" id="XP_054213026.1">
    <property type="nucleotide sequence ID" value="XM_054357051.1"/>
</dbReference>
<dbReference type="SMR" id="Q14563"/>
<dbReference type="BioGRID" id="115650">
    <property type="interactions" value="15"/>
</dbReference>
<dbReference type="CORUM" id="Q14563"/>
<dbReference type="DIP" id="DIP-5744N"/>
<dbReference type="FunCoup" id="Q14563">
    <property type="interactions" value="184"/>
</dbReference>
<dbReference type="IntAct" id="Q14563">
    <property type="interactions" value="3"/>
</dbReference>
<dbReference type="MINT" id="Q14563"/>
<dbReference type="STRING" id="9606.ENSP00000265362"/>
<dbReference type="GlyCosmos" id="Q14563">
    <property type="glycosylation" value="4 sites, 2 glycans"/>
</dbReference>
<dbReference type="GlyGen" id="Q14563">
    <property type="glycosylation" value="4 sites, 1 N-linked glycan (1 site), 2 O-linked glycans (1 site)"/>
</dbReference>
<dbReference type="iPTMnet" id="Q14563"/>
<dbReference type="PhosphoSitePlus" id="Q14563"/>
<dbReference type="BioMuta" id="SEMA3A"/>
<dbReference type="DMDM" id="8134674"/>
<dbReference type="jPOST" id="Q14563"/>
<dbReference type="MassIVE" id="Q14563"/>
<dbReference type="PaxDb" id="9606-ENSP00000265362"/>
<dbReference type="PeptideAtlas" id="Q14563"/>
<dbReference type="ProteomicsDB" id="60045"/>
<dbReference type="Antibodypedia" id="29608">
    <property type="antibodies" value="317 antibodies from 32 providers"/>
</dbReference>
<dbReference type="DNASU" id="10371"/>
<dbReference type="Ensembl" id="ENST00000265362.9">
    <property type="protein sequence ID" value="ENSP00000265362.3"/>
    <property type="gene ID" value="ENSG00000075213.11"/>
</dbReference>
<dbReference type="Ensembl" id="ENST00000436949.5">
    <property type="protein sequence ID" value="ENSP00000415260.1"/>
    <property type="gene ID" value="ENSG00000075213.11"/>
</dbReference>
<dbReference type="GeneID" id="10371"/>
<dbReference type="KEGG" id="hsa:10371"/>
<dbReference type="MANE-Select" id="ENST00000265362.9">
    <property type="protein sequence ID" value="ENSP00000265362.3"/>
    <property type="RefSeq nucleotide sequence ID" value="NM_006080.3"/>
    <property type="RefSeq protein sequence ID" value="NP_006071.1"/>
</dbReference>
<dbReference type="UCSC" id="uc003uhz.4">
    <property type="organism name" value="human"/>
</dbReference>
<dbReference type="AGR" id="HGNC:10723"/>
<dbReference type="CTD" id="10371"/>
<dbReference type="DisGeNET" id="10371"/>
<dbReference type="GeneCards" id="SEMA3A"/>
<dbReference type="GeneReviews" id="SEMA3A"/>
<dbReference type="HGNC" id="HGNC:10723">
    <property type="gene designation" value="SEMA3A"/>
</dbReference>
<dbReference type="HPA" id="ENSG00000075213">
    <property type="expression patterns" value="Tissue enhanced (retina)"/>
</dbReference>
<dbReference type="MalaCards" id="SEMA3A"/>
<dbReference type="MIM" id="603961">
    <property type="type" value="gene"/>
</dbReference>
<dbReference type="MIM" id="614897">
    <property type="type" value="phenotype"/>
</dbReference>
<dbReference type="neXtProt" id="NX_Q14563"/>
<dbReference type="OpenTargets" id="ENSG00000075213"/>
<dbReference type="Orphanet" id="130">
    <property type="disease" value="Brugada syndrome"/>
</dbReference>
<dbReference type="Orphanet" id="478">
    <property type="disease" value="Kallmann syndrome"/>
</dbReference>
<dbReference type="PharmGKB" id="PA35645"/>
<dbReference type="VEuPathDB" id="HostDB:ENSG00000075213"/>
<dbReference type="eggNOG" id="KOG3611">
    <property type="taxonomic scope" value="Eukaryota"/>
</dbReference>
<dbReference type="GeneTree" id="ENSGT00940000158203"/>
<dbReference type="HOGENOM" id="CLU_009051_5_0_1"/>
<dbReference type="InParanoid" id="Q14563"/>
<dbReference type="OMA" id="YEQPCCA"/>
<dbReference type="OrthoDB" id="9988752at2759"/>
<dbReference type="PAN-GO" id="Q14563">
    <property type="GO annotations" value="12 GO annotations based on evolutionary models"/>
</dbReference>
<dbReference type="PhylomeDB" id="Q14563"/>
<dbReference type="TreeFam" id="TF316102"/>
<dbReference type="PathwayCommons" id="Q14563"/>
<dbReference type="Reactome" id="R-HSA-399954">
    <property type="pathway name" value="Sema3A PAK dependent Axon repulsion"/>
</dbReference>
<dbReference type="Reactome" id="R-HSA-399955">
    <property type="pathway name" value="SEMA3A-Plexin repulsion signaling by inhibiting Integrin adhesion"/>
</dbReference>
<dbReference type="Reactome" id="R-HSA-399956">
    <property type="pathway name" value="CRMPs in Sema3A signaling"/>
</dbReference>
<dbReference type="SignaLink" id="Q14563"/>
<dbReference type="SIGNOR" id="Q14563"/>
<dbReference type="BioGRID-ORCS" id="10371">
    <property type="hits" value="11 hits in 1156 CRISPR screens"/>
</dbReference>
<dbReference type="ChiTaRS" id="SEMA3A">
    <property type="organism name" value="human"/>
</dbReference>
<dbReference type="GeneWiki" id="SEMA3A"/>
<dbReference type="GenomeRNAi" id="10371"/>
<dbReference type="Pharos" id="Q14563">
    <property type="development level" value="Tbio"/>
</dbReference>
<dbReference type="PRO" id="PR:Q14563"/>
<dbReference type="Proteomes" id="UP000005640">
    <property type="component" value="Chromosome 7"/>
</dbReference>
<dbReference type="RNAct" id="Q14563">
    <property type="molecule type" value="protein"/>
</dbReference>
<dbReference type="Bgee" id="ENSG00000075213">
    <property type="expression patterns" value="Expressed in stromal cell of endometrium and 129 other cell types or tissues"/>
</dbReference>
<dbReference type="ExpressionAtlas" id="Q14563">
    <property type="expression patterns" value="baseline and differential"/>
</dbReference>
<dbReference type="GO" id="GO:0030424">
    <property type="term" value="C:axon"/>
    <property type="evidence" value="ECO:0000318"/>
    <property type="project" value="GO_Central"/>
</dbReference>
<dbReference type="GO" id="GO:0005576">
    <property type="term" value="C:extracellular region"/>
    <property type="evidence" value="ECO:0000304"/>
    <property type="project" value="Reactome"/>
</dbReference>
<dbReference type="GO" id="GO:0005615">
    <property type="term" value="C:extracellular space"/>
    <property type="evidence" value="ECO:0000318"/>
    <property type="project" value="GO_Central"/>
</dbReference>
<dbReference type="GO" id="GO:0098978">
    <property type="term" value="C:glutamatergic synapse"/>
    <property type="evidence" value="ECO:0000318"/>
    <property type="project" value="GO_Central"/>
</dbReference>
<dbReference type="GO" id="GO:0005886">
    <property type="term" value="C:plasma membrane"/>
    <property type="evidence" value="ECO:0000318"/>
    <property type="project" value="GO_Central"/>
</dbReference>
<dbReference type="GO" id="GO:0045499">
    <property type="term" value="F:chemorepellent activity"/>
    <property type="evidence" value="ECO:0000318"/>
    <property type="project" value="GO_Central"/>
</dbReference>
<dbReference type="GO" id="GO:0038191">
    <property type="term" value="F:neuropilin binding"/>
    <property type="evidence" value="ECO:0000250"/>
    <property type="project" value="BHF-UCL"/>
</dbReference>
<dbReference type="GO" id="GO:0030215">
    <property type="term" value="F:semaphorin receptor binding"/>
    <property type="evidence" value="ECO:0000318"/>
    <property type="project" value="GO_Central"/>
</dbReference>
<dbReference type="GO" id="GO:0048846">
    <property type="term" value="P:axon extension involved in axon guidance"/>
    <property type="evidence" value="ECO:0000250"/>
    <property type="project" value="BHF-UCL"/>
</dbReference>
<dbReference type="GO" id="GO:0007411">
    <property type="term" value="P:axon guidance"/>
    <property type="evidence" value="ECO:0000304"/>
    <property type="project" value="BHF-UCL"/>
</dbReference>
<dbReference type="GO" id="GO:0060385">
    <property type="term" value="P:axonogenesis involved in innervation"/>
    <property type="evidence" value="ECO:0000250"/>
    <property type="project" value="BHF-UCL"/>
</dbReference>
<dbReference type="GO" id="GO:0150020">
    <property type="term" value="P:basal dendrite arborization"/>
    <property type="evidence" value="ECO:0000250"/>
    <property type="project" value="ARUK-UCL"/>
</dbReference>
<dbReference type="GO" id="GO:0021785">
    <property type="term" value="P:branchiomotor neuron axon guidance"/>
    <property type="evidence" value="ECO:0000250"/>
    <property type="project" value="ParkinsonsUK-UCL"/>
</dbReference>
<dbReference type="GO" id="GO:0021612">
    <property type="term" value="P:facial nerve structural organization"/>
    <property type="evidence" value="ECO:0000250"/>
    <property type="project" value="ParkinsonsUK-UCL"/>
</dbReference>
<dbReference type="GO" id="GO:0008045">
    <property type="term" value="P:motor neuron axon guidance"/>
    <property type="evidence" value="ECO:0000250"/>
    <property type="project" value="ParkinsonsUK-UCL"/>
</dbReference>
<dbReference type="GO" id="GO:0050919">
    <property type="term" value="P:negative chemotaxis"/>
    <property type="evidence" value="ECO:0000318"/>
    <property type="project" value="GO_Central"/>
</dbReference>
<dbReference type="GO" id="GO:0010977">
    <property type="term" value="P:negative regulation of neuron projection development"/>
    <property type="evidence" value="ECO:0000315"/>
    <property type="project" value="ParkinsonsUK-UCL"/>
</dbReference>
<dbReference type="GO" id="GO:0021675">
    <property type="term" value="P:nerve development"/>
    <property type="evidence" value="ECO:0000250"/>
    <property type="project" value="BHF-UCL"/>
</dbReference>
<dbReference type="GO" id="GO:0001755">
    <property type="term" value="P:neural crest cell migration"/>
    <property type="evidence" value="ECO:0000318"/>
    <property type="project" value="GO_Central"/>
</dbReference>
<dbReference type="GO" id="GO:1901166">
    <property type="term" value="P:neural crest cell migration involved in autonomic nervous system development"/>
    <property type="evidence" value="ECO:0000250"/>
    <property type="project" value="BHF-UCL"/>
</dbReference>
<dbReference type="GO" id="GO:0001764">
    <property type="term" value="P:neuron migration"/>
    <property type="evidence" value="ECO:0000250"/>
    <property type="project" value="BHF-UCL"/>
</dbReference>
<dbReference type="GO" id="GO:0021772">
    <property type="term" value="P:olfactory bulb development"/>
    <property type="evidence" value="ECO:0000315"/>
    <property type="project" value="UniProtKB"/>
</dbReference>
<dbReference type="GO" id="GO:0030335">
    <property type="term" value="P:positive regulation of cell migration"/>
    <property type="evidence" value="ECO:0000318"/>
    <property type="project" value="GO_Central"/>
</dbReference>
<dbReference type="GO" id="GO:0046330">
    <property type="term" value="P:positive regulation of JNK cascade"/>
    <property type="evidence" value="ECO:0000304"/>
    <property type="project" value="ARUK-UCL"/>
</dbReference>
<dbReference type="GO" id="GO:0048841">
    <property type="term" value="P:regulation of axon extension involved in axon guidance"/>
    <property type="evidence" value="ECO:0000314"/>
    <property type="project" value="UniProtKB"/>
</dbReference>
<dbReference type="GO" id="GO:0071526">
    <property type="term" value="P:semaphorin-plexin signaling pathway"/>
    <property type="evidence" value="ECO:0000250"/>
    <property type="project" value="BHF-UCL"/>
</dbReference>
<dbReference type="GO" id="GO:0048880">
    <property type="term" value="P:sensory system development"/>
    <property type="evidence" value="ECO:0000304"/>
    <property type="project" value="BHF-UCL"/>
</dbReference>
<dbReference type="GO" id="GO:0061549">
    <property type="term" value="P:sympathetic ganglion development"/>
    <property type="evidence" value="ECO:0000250"/>
    <property type="project" value="BHF-UCL"/>
</dbReference>
<dbReference type="GO" id="GO:0048485">
    <property type="term" value="P:sympathetic nervous system development"/>
    <property type="evidence" value="ECO:0000304"/>
    <property type="project" value="BHF-UCL"/>
</dbReference>
<dbReference type="GO" id="GO:0097490">
    <property type="term" value="P:sympathetic neuron projection extension"/>
    <property type="evidence" value="ECO:0000250"/>
    <property type="project" value="BHF-UCL"/>
</dbReference>
<dbReference type="GO" id="GO:0097491">
    <property type="term" value="P:sympathetic neuron projection guidance"/>
    <property type="evidence" value="ECO:0000250"/>
    <property type="project" value="BHF-UCL"/>
</dbReference>
<dbReference type="GO" id="GO:0021637">
    <property type="term" value="P:trigeminal nerve structural organization"/>
    <property type="evidence" value="ECO:0000250"/>
    <property type="project" value="ParkinsonsUK-UCL"/>
</dbReference>
<dbReference type="CDD" id="cd05871">
    <property type="entry name" value="Ig_Sema3"/>
    <property type="match status" value="1"/>
</dbReference>
<dbReference type="CDD" id="cd11249">
    <property type="entry name" value="Sema_3A"/>
    <property type="match status" value="1"/>
</dbReference>
<dbReference type="FunFam" id="2.130.10.10:FF:000015">
    <property type="entry name" value="Semaphorin 3B"/>
    <property type="match status" value="1"/>
</dbReference>
<dbReference type="FunFam" id="2.60.40.10:FF:000030">
    <property type="entry name" value="Semaphorin 3F like"/>
    <property type="match status" value="1"/>
</dbReference>
<dbReference type="FunFam" id="3.30.1680.10:FF:000001">
    <property type="entry name" value="Semaphorin 3F like"/>
    <property type="match status" value="1"/>
</dbReference>
<dbReference type="Gene3D" id="2.60.40.10">
    <property type="entry name" value="Immunoglobulins"/>
    <property type="match status" value="1"/>
</dbReference>
<dbReference type="Gene3D" id="3.30.1680.10">
    <property type="entry name" value="ligand-binding face of the semaphorins, domain 2"/>
    <property type="match status" value="1"/>
</dbReference>
<dbReference type="Gene3D" id="2.130.10.10">
    <property type="entry name" value="YVTN repeat-like/Quinoprotein amine dehydrogenase"/>
    <property type="match status" value="1"/>
</dbReference>
<dbReference type="InterPro" id="IPR007110">
    <property type="entry name" value="Ig-like_dom"/>
</dbReference>
<dbReference type="InterPro" id="IPR036179">
    <property type="entry name" value="Ig-like_dom_sf"/>
</dbReference>
<dbReference type="InterPro" id="IPR013783">
    <property type="entry name" value="Ig-like_fold"/>
</dbReference>
<dbReference type="InterPro" id="IPR003599">
    <property type="entry name" value="Ig_sub"/>
</dbReference>
<dbReference type="InterPro" id="IPR041416">
    <property type="entry name" value="IL-1RAcP-like_ig"/>
</dbReference>
<dbReference type="InterPro" id="IPR016201">
    <property type="entry name" value="PSI"/>
</dbReference>
<dbReference type="InterPro" id="IPR042820">
    <property type="entry name" value="Sema3A_sema"/>
</dbReference>
<dbReference type="InterPro" id="IPR001627">
    <property type="entry name" value="Semap_dom"/>
</dbReference>
<dbReference type="InterPro" id="IPR036352">
    <property type="entry name" value="Semap_dom_sf"/>
</dbReference>
<dbReference type="InterPro" id="IPR027231">
    <property type="entry name" value="Semaphorin"/>
</dbReference>
<dbReference type="InterPro" id="IPR015943">
    <property type="entry name" value="WD40/YVTN_repeat-like_dom_sf"/>
</dbReference>
<dbReference type="PANTHER" id="PTHR11036">
    <property type="entry name" value="SEMAPHORIN"/>
    <property type="match status" value="1"/>
</dbReference>
<dbReference type="PANTHER" id="PTHR11036:SF23">
    <property type="entry name" value="SEMAPHORIN-3A"/>
    <property type="match status" value="1"/>
</dbReference>
<dbReference type="Pfam" id="PF18452">
    <property type="entry name" value="Ig_6"/>
    <property type="match status" value="1"/>
</dbReference>
<dbReference type="Pfam" id="PF01403">
    <property type="entry name" value="Sema"/>
    <property type="match status" value="1"/>
</dbReference>
<dbReference type="SMART" id="SM00409">
    <property type="entry name" value="IG"/>
    <property type="match status" value="1"/>
</dbReference>
<dbReference type="SMART" id="SM00423">
    <property type="entry name" value="PSI"/>
    <property type="match status" value="1"/>
</dbReference>
<dbReference type="SMART" id="SM00630">
    <property type="entry name" value="Sema"/>
    <property type="match status" value="1"/>
</dbReference>
<dbReference type="SUPFAM" id="SSF48726">
    <property type="entry name" value="Immunoglobulin"/>
    <property type="match status" value="1"/>
</dbReference>
<dbReference type="SUPFAM" id="SSF103575">
    <property type="entry name" value="Plexin repeat"/>
    <property type="match status" value="1"/>
</dbReference>
<dbReference type="SUPFAM" id="SSF101912">
    <property type="entry name" value="Sema domain"/>
    <property type="match status" value="1"/>
</dbReference>
<dbReference type="PROSITE" id="PS50835">
    <property type="entry name" value="IG_LIKE"/>
    <property type="match status" value="1"/>
</dbReference>
<dbReference type="PROSITE" id="PS51004">
    <property type="entry name" value="SEMA"/>
    <property type="match status" value="1"/>
</dbReference>
<sequence>MGWLTRIVCLFWGVLLTARANYQNGKNNVPRLKLSYKEMLESNNVITFNGLANSSSYHTFLLDEERSRLYVGAKDHIFSFDLVNIKDFQKIVWPVSYTRRDECKWAGKDILKECANFIKVLKAYNQTHLYACGTGAFHPICTYIEIGHHPEDNIFKLENSHFENGRGKSPYDPKLLTASLLIDGELYSGTAADFMGRDFAIFRTLGHHHPIRTEQHDSRWLNDPKFISAHLISESDNPEDDKVYFFFRENAIDGEHSGKATHARIGQICKNDFGGHRSLVNKWTTFLKARLICSVPGPNGIDTHFDELQDVFLMNFKDPKNPVVYGVFTTSSNIFKGSAVCMYSMSDVRRVFLGPYAHRDGPNYQWVPYQGRVPYPRPGTCPSKTFGGFDSTKDLPDDVITFARSHPAMYNPVFPMNNRPIVIKTDVNYQFTQIVVDRVDAEDGQYDVMFIGTDVGTVLKVVSIPKETWYDLEEVLLEEMTVFREPTAISAMELSTKQQQLYIGSTAGVAQLPLHRCDIYGKACAECCLARDPYCAWDGSACSRYFPTAKRRTRRQDIRNGDPLTHCSDLHHDNHHGHSPEERIIYGVENSSTFLECSPKSQRALVYWQFQRRNEERKEEIRVDDHIIRTDQGLLLRSLQQKDSGNYLCHAVEHGFIQTLLKVTLEVIDTEHLEELLHKDDDGDGSKTKEMSNSMTPSQKVWYRDFMQLINHPNLNTMDEFCEQVWKRDRKQRRQRPGHTPGNSNKWKHLQENKKGRNRRTHEFERAPRSV</sequence>
<accession>Q14563</accession>
<feature type="signal peptide" evidence="2">
    <location>
        <begin position="1"/>
        <end position="20"/>
    </location>
</feature>
<feature type="chain" id="PRO_0000032303" description="Semaphorin-3A">
    <location>
        <begin position="21"/>
        <end position="771"/>
    </location>
</feature>
<feature type="domain" description="Sema" evidence="3">
    <location>
        <begin position="31"/>
        <end position="514"/>
    </location>
</feature>
<feature type="domain" description="Ig-like C2-type">
    <location>
        <begin position="580"/>
        <end position="664"/>
    </location>
</feature>
<feature type="region of interest" description="Disordered" evidence="4">
    <location>
        <begin position="728"/>
        <end position="771"/>
    </location>
</feature>
<feature type="compositionally biased region" description="Basic residues" evidence="4">
    <location>
        <begin position="728"/>
        <end position="737"/>
    </location>
</feature>
<feature type="compositionally biased region" description="Basic and acidic residues" evidence="4">
    <location>
        <begin position="749"/>
        <end position="771"/>
    </location>
</feature>
<feature type="glycosylation site" description="N-linked (GlcNAc...) asparagine" evidence="2">
    <location>
        <position position="53"/>
    </location>
</feature>
<feature type="glycosylation site" description="N-linked (GlcNAc...) asparagine" evidence="2">
    <location>
        <position position="125"/>
    </location>
</feature>
<feature type="glycosylation site" description="N-linked (GlcNAc...) asparagine" evidence="2">
    <location>
        <position position="590"/>
    </location>
</feature>
<feature type="disulfide bond" evidence="1">
    <location>
        <begin position="103"/>
        <end position="114"/>
    </location>
</feature>
<feature type="disulfide bond" evidence="1">
    <location>
        <begin position="132"/>
        <end position="141"/>
    </location>
</feature>
<feature type="disulfide bond" evidence="1">
    <location>
        <begin position="269"/>
        <end position="381"/>
    </location>
</feature>
<feature type="disulfide bond" evidence="1">
    <location>
        <begin position="293"/>
        <end position="341"/>
    </location>
</feature>
<feature type="disulfide bond" evidence="1">
    <location>
        <begin position="517"/>
        <end position="535"/>
    </location>
</feature>
<feature type="disulfide bond" evidence="1">
    <location>
        <begin position="649"/>
        <end position="722"/>
    </location>
</feature>
<feature type="sequence variant" id="VAR_069200" description="In HH16; phenotype consistent with Kallmann syndrome; dbSNP:rs199979628." evidence="8 9">
    <original>R</original>
    <variation>W</variation>
    <location>
        <position position="66"/>
    </location>
</feature>
<feature type="sequence variant" id="VAR_072986" description="In HH16; uncertain significance." evidence="9">
    <original>L</original>
    <variation>R</variation>
    <location>
        <position position="82"/>
    </location>
</feature>
<feature type="sequence variant" id="VAR_036283" description="In a breast cancer sample; somatic mutation; dbSNP:rs143007146." evidence="5">
    <original>A</original>
    <variation>T</variation>
    <location>
        <position position="131"/>
    </location>
</feature>
<feature type="sequence variant" id="VAR_069201" description="In HH16; phenotype consistent with Kallmann syndrome; dbSNP:rs139295139." evidence="8 9">
    <original>N</original>
    <variation>S</variation>
    <location>
        <position position="153"/>
    </location>
</feature>
<feature type="sequence variant" id="VAR_072987" description="In HH16; phenotype consistent with Kallmann syndrome." evidence="9">
    <original>M</original>
    <variation>T</variation>
    <location>
        <position position="342"/>
    </location>
</feature>
<feature type="sequence variant" id="VAR_064749" description="Found in a renal cell carcinoma sample; somatic mutation; dbSNP:rs866354226." evidence="6">
    <original>P</original>
    <variation>S</variation>
    <location>
        <position position="396"/>
    </location>
</feature>
<feature type="sequence variant" id="VAR_069202" description="In HH16; phenotype consistent with Kallmann syndrome; digenic; found in a patient also carrying mutation Cys-268 in PROKR2; dbSNP:rs36026860." evidence="8">
    <original>I</original>
    <variation>V</variation>
    <location>
        <position position="400"/>
    </location>
</feature>
<feature type="sequence variant" id="VAR_069203" description="In HH16; phenotype consistent with Kallmann syndrome; digenic; found in patients also carrying mutation Cys-268 in PROKR2 or mutation Arg-687 in FGFR1; dbSNP:rs147436181." evidence="8 9">
    <original>V</original>
    <variation>I</variation>
    <location>
        <position position="435"/>
    </location>
</feature>
<feature type="sequence variant" id="VAR_072988" description="In HH16; phenotype consistent with Kallmann syndrome; dbSNP:rs761486957." evidence="9">
    <original>D</original>
    <variation>G</variation>
    <location>
        <position position="447"/>
    </location>
</feature>
<feature type="sequence variant" id="VAR_072989" description="In HH16; uncertain significance; dbSNP:rs137871935." evidence="9">
    <original>R</original>
    <variation>W</variation>
    <location>
        <position position="484"/>
    </location>
</feature>
<feature type="sequence variant" id="VAR_072990" description="In HH16; phenotype consistent with Kallmann syndrome; dbSNP:rs748219597." evidence="9">
    <original>I</original>
    <variation>M</variation>
    <location>
        <position position="657"/>
    </location>
</feature>
<feature type="sequence variant" id="VAR_069204" description="In HH16; phenotype consistent with Kallmann syndrome; digenic; found in a patient also carrying mutation Asp-217 in KAL1; dbSNP:rs318240751." evidence="8">
    <original>T</original>
    <variation>A</variation>
    <location>
        <position position="688"/>
    </location>
</feature>
<feature type="sequence variant" id="VAR_069205" description="In HH16; phenotype consistent with Kallmann syndrome; dbSNP:rs318240752." evidence="8 9">
    <original>R</original>
    <variation>Q</variation>
    <location>
        <position position="730"/>
    </location>
</feature>
<feature type="sequence variant" id="VAR_069206" description="In HH16; phenotype consistent with Kallmann syndrome; dbSNP:rs318240753." evidence="8">
    <original>R</original>
    <variation>H</variation>
    <location>
        <position position="733"/>
    </location>
</feature>
<proteinExistence type="evidence at protein level"/>
<protein>
    <recommendedName>
        <fullName>Semaphorin-3A</fullName>
    </recommendedName>
    <alternativeName>
        <fullName>Semaphorin III</fullName>
        <shortName>Sema III</shortName>
    </alternativeName>
</protein>
<organism>
    <name type="scientific">Homo sapiens</name>
    <name type="common">Human</name>
    <dbReference type="NCBI Taxonomy" id="9606"/>
    <lineage>
        <taxon>Eukaryota</taxon>
        <taxon>Metazoa</taxon>
        <taxon>Chordata</taxon>
        <taxon>Craniata</taxon>
        <taxon>Vertebrata</taxon>
        <taxon>Euteleostomi</taxon>
        <taxon>Mammalia</taxon>
        <taxon>Eutheria</taxon>
        <taxon>Euarchontoglires</taxon>
        <taxon>Primates</taxon>
        <taxon>Haplorrhini</taxon>
        <taxon>Catarrhini</taxon>
        <taxon>Hominidae</taxon>
        <taxon>Homo</taxon>
    </lineage>
</organism>
<gene>
    <name type="primary">SEMA3A</name>
    <name type="synonym">SEMAD</name>
</gene>
<reference key="1">
    <citation type="journal article" date="1993" name="Cell">
        <title>The semaphorin genes encode a family of transmembrane and secreted growth cone guidance molecules.</title>
        <authorList>
            <person name="Kolodkin A.L."/>
            <person name="Matthes D.J."/>
            <person name="Goodman C.S."/>
        </authorList>
    </citation>
    <scope>NUCLEOTIDE SEQUENCE [MRNA]</scope>
    <source>
        <tissue>Fetal brain</tissue>
    </source>
</reference>
<reference key="2">
    <citation type="journal article" date="2003" name="Nature">
        <title>The DNA sequence of human chromosome 7.</title>
        <authorList>
            <person name="Hillier L.W."/>
            <person name="Fulton R.S."/>
            <person name="Fulton L.A."/>
            <person name="Graves T.A."/>
            <person name="Pepin K.H."/>
            <person name="Wagner-McPherson C."/>
            <person name="Layman D."/>
            <person name="Maas J."/>
            <person name="Jaeger S."/>
            <person name="Walker R."/>
            <person name="Wylie K."/>
            <person name="Sekhon M."/>
            <person name="Becker M.C."/>
            <person name="O'Laughlin M.D."/>
            <person name="Schaller M.E."/>
            <person name="Fewell G.A."/>
            <person name="Delehaunty K.D."/>
            <person name="Miner T.L."/>
            <person name="Nash W.E."/>
            <person name="Cordes M."/>
            <person name="Du H."/>
            <person name="Sun H."/>
            <person name="Edwards J."/>
            <person name="Bradshaw-Cordum H."/>
            <person name="Ali J."/>
            <person name="Andrews S."/>
            <person name="Isak A."/>
            <person name="Vanbrunt A."/>
            <person name="Nguyen C."/>
            <person name="Du F."/>
            <person name="Lamar B."/>
            <person name="Courtney L."/>
            <person name="Kalicki J."/>
            <person name="Ozersky P."/>
            <person name="Bielicki L."/>
            <person name="Scott K."/>
            <person name="Holmes A."/>
            <person name="Harkins R."/>
            <person name="Harris A."/>
            <person name="Strong C.M."/>
            <person name="Hou S."/>
            <person name="Tomlinson C."/>
            <person name="Dauphin-Kohlberg S."/>
            <person name="Kozlowicz-Reilly A."/>
            <person name="Leonard S."/>
            <person name="Rohlfing T."/>
            <person name="Rock S.M."/>
            <person name="Tin-Wollam A.-M."/>
            <person name="Abbott A."/>
            <person name="Minx P."/>
            <person name="Maupin R."/>
            <person name="Strowmatt C."/>
            <person name="Latreille P."/>
            <person name="Miller N."/>
            <person name="Johnson D."/>
            <person name="Murray J."/>
            <person name="Woessner J.P."/>
            <person name="Wendl M.C."/>
            <person name="Yang S.-P."/>
            <person name="Schultz B.R."/>
            <person name="Wallis J.W."/>
            <person name="Spieth J."/>
            <person name="Bieri T.A."/>
            <person name="Nelson J.O."/>
            <person name="Berkowicz N."/>
            <person name="Wohldmann P.E."/>
            <person name="Cook L.L."/>
            <person name="Hickenbotham M.T."/>
            <person name="Eldred J."/>
            <person name="Williams D."/>
            <person name="Bedell J.A."/>
            <person name="Mardis E.R."/>
            <person name="Clifton S.W."/>
            <person name="Chissoe S.L."/>
            <person name="Marra M.A."/>
            <person name="Raymond C."/>
            <person name="Haugen E."/>
            <person name="Gillett W."/>
            <person name="Zhou Y."/>
            <person name="James R."/>
            <person name="Phelps K."/>
            <person name="Iadanoto S."/>
            <person name="Bubb K."/>
            <person name="Simms E."/>
            <person name="Levy R."/>
            <person name="Clendenning J."/>
            <person name="Kaul R."/>
            <person name="Kent W.J."/>
            <person name="Furey T.S."/>
            <person name="Baertsch R.A."/>
            <person name="Brent M.R."/>
            <person name="Keibler E."/>
            <person name="Flicek P."/>
            <person name="Bork P."/>
            <person name="Suyama M."/>
            <person name="Bailey J.A."/>
            <person name="Portnoy M.E."/>
            <person name="Torrents D."/>
            <person name="Chinwalla A.T."/>
            <person name="Gish W.R."/>
            <person name="Eddy S.R."/>
            <person name="McPherson J.D."/>
            <person name="Olson M.V."/>
            <person name="Eichler E.E."/>
            <person name="Green E.D."/>
            <person name="Waterston R.H."/>
            <person name="Wilson R.K."/>
        </authorList>
    </citation>
    <scope>NUCLEOTIDE SEQUENCE [LARGE SCALE GENOMIC DNA]</scope>
</reference>
<reference key="3">
    <citation type="journal article" date="2012" name="Hum. Reprod.">
        <title>SEMA3A deletion in a family with Kallmann syndrome validates the role of semaphorin 3A in human puberty and olfactory system development.</title>
        <authorList>
            <person name="Young J."/>
            <person name="Metay C."/>
            <person name="Bouligand J."/>
            <person name="Tou B."/>
            <person name="Francou B."/>
            <person name="Maione L."/>
            <person name="Tosca L."/>
            <person name="Sarfati J."/>
            <person name="Brioude F."/>
            <person name="Esteva B."/>
            <person name="Briand-Suleau A."/>
            <person name="Brisset S."/>
            <person name="Goossens M."/>
            <person name="Tachdjian G."/>
            <person name="Guiochon-Mantel A."/>
        </authorList>
    </citation>
    <scope>INVOLVEMENT IN HH16</scope>
    <scope>FUNCTION</scope>
</reference>
<reference key="4">
    <citation type="journal article" date="2017" name="Front. Neurol.">
        <title>Expression of Semaphorins, Neuropilins, VEGF, and Tenascins in Rat and Human Primary Sensory Neurons after a Dorsal Root Injury.</title>
        <authorList>
            <person name="Lindholm T."/>
            <person name="Risling M."/>
            <person name="Carlstedt T."/>
            <person name="Hammarberg H."/>
            <person name="Wallquist W."/>
            <person name="Cullheim S."/>
            <person name="Skoeld M.K."/>
        </authorList>
    </citation>
    <scope>TISSUE SPECIFICITY</scope>
</reference>
<reference key="5">
    <citation type="journal article" date="2006" name="Science">
        <title>The consensus coding sequences of human breast and colorectal cancers.</title>
        <authorList>
            <person name="Sjoeblom T."/>
            <person name="Jones S."/>
            <person name="Wood L.D."/>
            <person name="Parsons D.W."/>
            <person name="Lin J."/>
            <person name="Barber T.D."/>
            <person name="Mandelker D."/>
            <person name="Leary R.J."/>
            <person name="Ptak J."/>
            <person name="Silliman N."/>
            <person name="Szabo S."/>
            <person name="Buckhaults P."/>
            <person name="Farrell C."/>
            <person name="Meeh P."/>
            <person name="Markowitz S.D."/>
            <person name="Willis J."/>
            <person name="Dawson D."/>
            <person name="Willson J.K.V."/>
            <person name="Gazdar A.F."/>
            <person name="Hartigan J."/>
            <person name="Wu L."/>
            <person name="Liu C."/>
            <person name="Parmigiani G."/>
            <person name="Park B.H."/>
            <person name="Bachman K.E."/>
            <person name="Papadopoulos N."/>
            <person name="Vogelstein B."/>
            <person name="Kinzler K.W."/>
            <person name="Velculescu V.E."/>
        </authorList>
    </citation>
    <scope>VARIANT [LARGE SCALE ANALYSIS] THR-131</scope>
</reference>
<reference key="6">
    <citation type="journal article" date="2011" name="Nature">
        <title>Exome sequencing identifies frequent mutation of the SWI/SNF complex gene PBRM1 in renal carcinoma.</title>
        <authorList>
            <person name="Varela I."/>
            <person name="Tarpey P."/>
            <person name="Raine K."/>
            <person name="Huang D."/>
            <person name="Ong C.K."/>
            <person name="Stephens P."/>
            <person name="Davies H."/>
            <person name="Jones D."/>
            <person name="Lin M.L."/>
            <person name="Teague J."/>
            <person name="Bignell G."/>
            <person name="Butler A."/>
            <person name="Cho J."/>
            <person name="Dalgliesh G.L."/>
            <person name="Galappaththige D."/>
            <person name="Greenman C."/>
            <person name="Hardy C."/>
            <person name="Jia M."/>
            <person name="Latimer C."/>
            <person name="Lau K.W."/>
            <person name="Marshall J."/>
            <person name="McLaren S."/>
            <person name="Menzies A."/>
            <person name="Mudie L."/>
            <person name="Stebbings L."/>
            <person name="Largaespada D.A."/>
            <person name="Wessels L.F.A."/>
            <person name="Richard S."/>
            <person name="Kahnoski R.J."/>
            <person name="Anema J."/>
            <person name="Tuveson D.A."/>
            <person name="Perez-Mancera P.A."/>
            <person name="Mustonen V."/>
            <person name="Fischer A."/>
            <person name="Adams D.J."/>
            <person name="Rust A."/>
            <person name="Chan-On W."/>
            <person name="Subimerb C."/>
            <person name="Dykema K."/>
            <person name="Furge K."/>
            <person name="Campbell P.J."/>
            <person name="Teh B.T."/>
            <person name="Stratton M.R."/>
            <person name="Futreal P.A."/>
        </authorList>
    </citation>
    <scope>VARIANT SER-396</scope>
</reference>
<reference key="7">
    <citation type="journal article" date="2012" name="PLoS Genet.">
        <title>SEMA3A, a gene involved in axonal pathfinding, is mutated in patients with Kallmann syndrome.</title>
        <authorList>
            <person name="Hanchate N.K."/>
            <person name="Giacobini P."/>
            <person name="Lhuillier P."/>
            <person name="Parkash J."/>
            <person name="Espy C."/>
            <person name="Fouveaut C."/>
            <person name="Leroy C."/>
            <person name="Baron S."/>
            <person name="Campagne C."/>
            <person name="Vanacker C."/>
            <person name="Collier F."/>
            <person name="Cruaud C."/>
            <person name="Meyer V."/>
            <person name="Garcia-Pinero A."/>
            <person name="Dewailly D."/>
            <person name="Cortet-Rudelli C."/>
            <person name="Gersak K."/>
            <person name="Metz C."/>
            <person name="Chabrier G."/>
            <person name="Pugeat M."/>
            <person name="Young J."/>
            <person name="Hardelin J.P."/>
            <person name="Prevot V."/>
            <person name="Dode C."/>
        </authorList>
    </citation>
    <scope>VARIANTS HH16 TRP-66; SER-153; VAL-400; ILE-435; ALA-688; GLN-730 AND HIS-733</scope>
    <scope>CHARACTERIZATION OF VARIANTS HH16 TRP-66; SER-153; VAL-400; ILE-435; ALA-688; GLN-730 AND HIS-733</scope>
</reference>
<reference key="8">
    <citation type="journal article" date="2014" name="J. Clin. Endocrinol. Metab.">
        <title>The prevalence of CHD7 missense versus truncating mutations is higher in patients with Kallmann syndrome than in typical CHARGE patients.</title>
        <authorList>
            <person name="Marcos S."/>
            <person name="Sarfati J."/>
            <person name="Leroy C."/>
            <person name="Fouveaut C."/>
            <person name="Parent P."/>
            <person name="Metz C."/>
            <person name="Wolczynski S."/>
            <person name="Gerard M."/>
            <person name="Bieth E."/>
            <person name="Kurtz F."/>
            <person name="Verier-Mine O."/>
            <person name="Perrin L."/>
            <person name="Archambeaud F."/>
            <person name="Cabrol S."/>
            <person name="Rodien P."/>
            <person name="Hove H."/>
            <person name="Prescott T."/>
            <person name="Lacombe D."/>
            <person name="Christin-Maitre S."/>
            <person name="Touraine P."/>
            <person name="Hieronimus S."/>
            <person name="Dewailly D."/>
            <person name="Young J."/>
            <person name="Pugeat M."/>
            <person name="Hardelin J.P."/>
            <person name="Dode C."/>
        </authorList>
    </citation>
    <scope>VARIANTS HH16 TRP-66; ARG-82; SER-153; THR-342; ILE-435; GLY-447; TRP-484; MET-657 AND GLN-730</scope>
</reference>
<name>SEM3A_HUMAN</name>